<name>TPSGB_SOLHA</name>
<feature type="chain" id="PRO_0000412240" description="(E,E)-germacrene B synthase">
    <location>
        <begin position="1"/>
        <end position="544"/>
    </location>
</feature>
<feature type="short sequence motif" description="DDXXD motif">
    <location>
        <begin position="296"/>
        <end position="300"/>
    </location>
</feature>
<feature type="binding site" evidence="1">
    <location>
        <position position="296"/>
    </location>
    <ligand>
        <name>Mg(2+)</name>
        <dbReference type="ChEBI" id="CHEBI:18420"/>
        <label>1</label>
    </ligand>
</feature>
<feature type="binding site" evidence="1">
    <location>
        <position position="296"/>
    </location>
    <ligand>
        <name>Mg(2+)</name>
        <dbReference type="ChEBI" id="CHEBI:18420"/>
        <label>2</label>
    </ligand>
</feature>
<feature type="binding site" evidence="1">
    <location>
        <position position="300"/>
    </location>
    <ligand>
        <name>Mg(2+)</name>
        <dbReference type="ChEBI" id="CHEBI:18420"/>
        <label>1</label>
    </ligand>
</feature>
<feature type="binding site" evidence="1">
    <location>
        <position position="300"/>
    </location>
    <ligand>
        <name>Mg(2+)</name>
        <dbReference type="ChEBI" id="CHEBI:18420"/>
        <label>2</label>
    </ligand>
</feature>
<feature type="binding site" evidence="1">
    <location>
        <position position="449"/>
    </location>
    <ligand>
        <name>Mg(2+)</name>
        <dbReference type="ChEBI" id="CHEBI:18420"/>
        <label>3</label>
    </ligand>
</feature>
<dbReference type="EC" id="4.2.3.71"/>
<dbReference type="EMBL" id="AF279455">
    <property type="protein sequence ID" value="AAG41891.1"/>
    <property type="molecule type" value="mRNA"/>
</dbReference>
<dbReference type="SMR" id="Q9FQ27"/>
<dbReference type="KEGG" id="ag:AAG41891"/>
<dbReference type="BRENDA" id="4.2.3.71">
    <property type="organism ID" value="3102"/>
</dbReference>
<dbReference type="UniPathway" id="UPA00213"/>
<dbReference type="GO" id="GO:0005737">
    <property type="term" value="C:cytoplasm"/>
    <property type="evidence" value="ECO:0007669"/>
    <property type="project" value="UniProtKB-SubCell"/>
</dbReference>
<dbReference type="GO" id="GO:0000287">
    <property type="term" value="F:magnesium ion binding"/>
    <property type="evidence" value="ECO:0007669"/>
    <property type="project" value="InterPro"/>
</dbReference>
<dbReference type="GO" id="GO:0010333">
    <property type="term" value="F:terpene synthase activity"/>
    <property type="evidence" value="ECO:0007669"/>
    <property type="project" value="InterPro"/>
</dbReference>
<dbReference type="GO" id="GO:0016102">
    <property type="term" value="P:diterpenoid biosynthetic process"/>
    <property type="evidence" value="ECO:0007669"/>
    <property type="project" value="InterPro"/>
</dbReference>
<dbReference type="CDD" id="cd00684">
    <property type="entry name" value="Terpene_cyclase_plant_C1"/>
    <property type="match status" value="1"/>
</dbReference>
<dbReference type="FunFam" id="1.10.600.10:FF:000007">
    <property type="entry name" value="Isoprene synthase, chloroplastic"/>
    <property type="match status" value="1"/>
</dbReference>
<dbReference type="FunFam" id="1.50.10.130:FF:000001">
    <property type="entry name" value="Isoprene synthase, chloroplastic"/>
    <property type="match status" value="1"/>
</dbReference>
<dbReference type="Gene3D" id="1.10.600.10">
    <property type="entry name" value="Farnesyl Diphosphate Synthase"/>
    <property type="match status" value="1"/>
</dbReference>
<dbReference type="Gene3D" id="1.50.10.130">
    <property type="entry name" value="Terpene synthase, N-terminal domain"/>
    <property type="match status" value="1"/>
</dbReference>
<dbReference type="InterPro" id="IPR008949">
    <property type="entry name" value="Isoprenoid_synthase_dom_sf"/>
</dbReference>
<dbReference type="InterPro" id="IPR034741">
    <property type="entry name" value="Terpene_cyclase-like_1_C"/>
</dbReference>
<dbReference type="InterPro" id="IPR044814">
    <property type="entry name" value="Terpene_cyclase_plant_C1"/>
</dbReference>
<dbReference type="InterPro" id="IPR001906">
    <property type="entry name" value="Terpene_synth_N"/>
</dbReference>
<dbReference type="InterPro" id="IPR036965">
    <property type="entry name" value="Terpene_synth_N_sf"/>
</dbReference>
<dbReference type="InterPro" id="IPR050148">
    <property type="entry name" value="Terpene_synthase-like"/>
</dbReference>
<dbReference type="InterPro" id="IPR005630">
    <property type="entry name" value="Terpene_synthase_metal-bd"/>
</dbReference>
<dbReference type="InterPro" id="IPR008930">
    <property type="entry name" value="Terpenoid_cyclase/PrenylTrfase"/>
</dbReference>
<dbReference type="PANTHER" id="PTHR31225">
    <property type="entry name" value="OS04G0344100 PROTEIN-RELATED"/>
    <property type="match status" value="1"/>
</dbReference>
<dbReference type="PANTHER" id="PTHR31225:SF246">
    <property type="entry name" value="SESQUITERPENE SYNTHASE 9"/>
    <property type="match status" value="1"/>
</dbReference>
<dbReference type="Pfam" id="PF01397">
    <property type="entry name" value="Terpene_synth"/>
    <property type="match status" value="1"/>
</dbReference>
<dbReference type="Pfam" id="PF03936">
    <property type="entry name" value="Terpene_synth_C"/>
    <property type="match status" value="1"/>
</dbReference>
<dbReference type="SFLD" id="SFLDS00005">
    <property type="entry name" value="Isoprenoid_Synthase_Type_I"/>
    <property type="match status" value="1"/>
</dbReference>
<dbReference type="SFLD" id="SFLDG01019">
    <property type="entry name" value="Terpene_Cyclase_Like_1_C_Termi"/>
    <property type="match status" value="1"/>
</dbReference>
<dbReference type="SUPFAM" id="SSF48239">
    <property type="entry name" value="Terpenoid cyclases/Protein prenyltransferases"/>
    <property type="match status" value="1"/>
</dbReference>
<dbReference type="SUPFAM" id="SSF48576">
    <property type="entry name" value="Terpenoid synthases"/>
    <property type="match status" value="1"/>
</dbReference>
<keyword id="KW-0963">Cytoplasm</keyword>
<keyword id="KW-0456">Lyase</keyword>
<keyword id="KW-0460">Magnesium</keyword>
<keyword id="KW-0464">Manganese</keyword>
<keyword id="KW-0479">Metal-binding</keyword>
<sequence length="544" mass="63723">MAASSANKSRPLANFHPTVWGYHFLSYTHEITNQEKVEVDEYKETIRKMLVEAPEGSEQKLVLIDAMQRLGVAYHFHNEIETSIQNIFDAPKQNNNLHIVSLRFRLVRQQGHYMSSDVFKQFTNQDGKFKETLTNDVQGLLSLYEASYLRVRDEEILEEALAFTTTHLKSIVSTMSNNNNSLKVEVSEALTQPIRMTLPRMEARRYISIYENNDAHNHLLLKFAKLDFNMLQKLHQRELSDLTRWWKDLDFANKYPYARDRLVECYFWILGVYFEPKYSRARKMMTKVLKMTSIIDDTFDAYATFDELEPFNDAIQRWDANAIDSIPPYMRPAYQAFLDIYSEMEQVLSKKGKLDRVYYAKNEMKKLVRAYFKETQWLNDCDHIPKYEEHMENSLVSGGYMMIPTTCLVGMEEFISIETFEWLMNDPLIVRASSLIARAMNDIVGHEVEQERGHVASLIECYMKDYGASKQEAYAKFKKDVTNAWKDINKEFFRPTEVPMFVLERVLNLTRAAEPLYKEKDAYTNAKGKLKNMINSILIESVKI</sequence>
<protein>
    <recommendedName>
        <fullName>(E,E)-germacrene B synthase</fullName>
        <ecNumber>4.2.3.71</ecNumber>
    </recommendedName>
</protein>
<evidence type="ECO:0000250" key="1"/>
<evidence type="ECO:0000269" key="2">
    <source>
    </source>
</evidence>
<evidence type="ECO:0000305" key="3"/>
<proteinExistence type="evidence at protein level"/>
<reference key="1">
    <citation type="journal article" date="2000" name="Plant Cell">
        <title>Genetic Control and Evolution of Sesquiterpene Biosynthesis in Lycopersicon esculentum and Lycopersicon hirsutum.</title>
        <authorList>
            <person name="van Der Hoeven R.S."/>
            <person name="Monforte A.J."/>
            <person name="Breeden D."/>
            <person name="Tanksley S.D."/>
            <person name="Steffens J.C."/>
        </authorList>
    </citation>
    <scope>NUCLEOTIDE SEQUENCE [MRNA]</scope>
    <scope>FUNCTION</scope>
    <scope>CATALYTIC ACTIVITY</scope>
</reference>
<accession>Q9FQ27</accession>
<gene>
    <name type="primary">SSTLH1</name>
</gene>
<comment type="function">
    <text evidence="2">Involved in the biosynthesis of germacrene B.</text>
</comment>
<comment type="catalytic activity">
    <reaction evidence="2">
        <text>(2E,6E)-farnesyl diphosphate = (1E,4E)-germacrene B + diphosphate</text>
        <dbReference type="Rhea" id="RHEA:25444"/>
        <dbReference type="ChEBI" id="CHEBI:5337"/>
        <dbReference type="ChEBI" id="CHEBI:33019"/>
        <dbReference type="ChEBI" id="CHEBI:175763"/>
        <dbReference type="EC" id="4.2.3.71"/>
    </reaction>
</comment>
<comment type="cofactor">
    <cofactor evidence="3">
        <name>Mg(2+)</name>
        <dbReference type="ChEBI" id="CHEBI:18420"/>
    </cofactor>
    <cofactor evidence="3">
        <name>Mn(2+)</name>
        <dbReference type="ChEBI" id="CHEBI:29035"/>
    </cofactor>
    <text evidence="3">Binds 3 Mg(2+) or Mn(2+) ions per subunit.</text>
</comment>
<comment type="pathway">
    <text>Secondary metabolite biosynthesis; terpenoid biosynthesis.</text>
</comment>
<comment type="subcellular location">
    <subcellularLocation>
        <location evidence="3">Cytoplasm</location>
    </subcellularLocation>
</comment>
<comment type="domain">
    <text evidence="1">The Asp-Asp-Xaa-Xaa-Asp/Glu (DDXXD/E) motif is important for the catalytic activity, presumably through binding to Mg(2+).</text>
</comment>
<comment type="similarity">
    <text evidence="3">Belongs to the terpene synthase family.</text>
</comment>
<organism>
    <name type="scientific">Solanum habrochaites</name>
    <name type="common">Wild tomato</name>
    <name type="synonym">Lycopersicon hirsutum</name>
    <dbReference type="NCBI Taxonomy" id="62890"/>
    <lineage>
        <taxon>Eukaryota</taxon>
        <taxon>Viridiplantae</taxon>
        <taxon>Streptophyta</taxon>
        <taxon>Embryophyta</taxon>
        <taxon>Tracheophyta</taxon>
        <taxon>Spermatophyta</taxon>
        <taxon>Magnoliopsida</taxon>
        <taxon>eudicotyledons</taxon>
        <taxon>Gunneridae</taxon>
        <taxon>Pentapetalae</taxon>
        <taxon>asterids</taxon>
        <taxon>lamiids</taxon>
        <taxon>Solanales</taxon>
        <taxon>Solanaceae</taxon>
        <taxon>Solanoideae</taxon>
        <taxon>Solaneae</taxon>
        <taxon>Solanum</taxon>
        <taxon>Solanum subgen. Lycopersicon</taxon>
    </lineage>
</organism>